<evidence type="ECO:0000250" key="1"/>
<evidence type="ECO:0000255" key="2">
    <source>
        <dbReference type="PROSITE-ProRule" id="PRU01056"/>
    </source>
</evidence>
<evidence type="ECO:0000269" key="3">
    <source>
    </source>
</evidence>
<dbReference type="EMBL" id="AL590450">
    <property type="protein sequence ID" value="CAD26105.2"/>
    <property type="molecule type" value="Genomic_DNA"/>
</dbReference>
<dbReference type="RefSeq" id="NP_586501.1">
    <property type="nucleotide sequence ID" value="NM_001042334.1"/>
</dbReference>
<dbReference type="SMR" id="Q8SQR3"/>
<dbReference type="FunCoup" id="Q8SQR3">
    <property type="interactions" value="43"/>
</dbReference>
<dbReference type="STRING" id="284813.Q8SQR3"/>
<dbReference type="GeneID" id="860155"/>
<dbReference type="KEGG" id="ecu:ECU11_1950"/>
<dbReference type="VEuPathDB" id="MicrosporidiaDB:ECU11_1950"/>
<dbReference type="HOGENOM" id="CLU_017718_8_0_1"/>
<dbReference type="InParanoid" id="Q8SQR3"/>
<dbReference type="OrthoDB" id="416553at2759"/>
<dbReference type="Proteomes" id="UP000000819">
    <property type="component" value="Chromosome XI"/>
</dbReference>
<dbReference type="GO" id="GO:0005938">
    <property type="term" value="C:cell cortex"/>
    <property type="evidence" value="ECO:0007669"/>
    <property type="project" value="UniProtKB-ARBA"/>
</dbReference>
<dbReference type="GO" id="GO:0032156">
    <property type="term" value="C:septin cytoskeleton"/>
    <property type="evidence" value="ECO:0007669"/>
    <property type="project" value="UniProtKB-ARBA"/>
</dbReference>
<dbReference type="GO" id="GO:0005525">
    <property type="term" value="F:GTP binding"/>
    <property type="evidence" value="ECO:0007669"/>
    <property type="project" value="UniProtKB-KW"/>
</dbReference>
<dbReference type="GO" id="GO:0051301">
    <property type="term" value="P:cell division"/>
    <property type="evidence" value="ECO:0007669"/>
    <property type="project" value="UniProtKB-KW"/>
</dbReference>
<dbReference type="Gene3D" id="3.40.50.300">
    <property type="entry name" value="P-loop containing nucleotide triphosphate hydrolases"/>
    <property type="match status" value="1"/>
</dbReference>
<dbReference type="InterPro" id="IPR030379">
    <property type="entry name" value="G_SEPTIN_dom"/>
</dbReference>
<dbReference type="InterPro" id="IPR027417">
    <property type="entry name" value="P-loop_NTPase"/>
</dbReference>
<dbReference type="InterPro" id="IPR016491">
    <property type="entry name" value="Septin"/>
</dbReference>
<dbReference type="PANTHER" id="PTHR18884">
    <property type="entry name" value="SEPTIN"/>
    <property type="match status" value="1"/>
</dbReference>
<dbReference type="Pfam" id="PF00735">
    <property type="entry name" value="Septin"/>
    <property type="match status" value="1"/>
</dbReference>
<dbReference type="PIRSF" id="PIRSF006698">
    <property type="entry name" value="Septin"/>
    <property type="match status" value="1"/>
</dbReference>
<dbReference type="SUPFAM" id="SSF52540">
    <property type="entry name" value="P-loop containing nucleoside triphosphate hydrolases"/>
    <property type="match status" value="1"/>
</dbReference>
<dbReference type="PROSITE" id="PS51719">
    <property type="entry name" value="G_SEPTIN"/>
    <property type="match status" value="1"/>
</dbReference>
<sequence length="356" mass="41331">MKNIPTIVRNLGTINIRNNVGFSSVPDQVRESSMVKGFELNVLVVGRRGLGTSTLINSIFAAPLVDKKRTNNITATRNEIVENDISLEISIVTYHEANISPVLDYINAMNREYFDNEQGLYKAFKDNRVHVCLYLLPSDTLTDQEIKNMYELSQSCNLVPIIPKADMYTPDELADVKENVRQILSENNIFSFVPYLNENDGDLTEEVADIVGCMPFAVIASETMYEHGGEIIRGRKYPWGFINIDQEESNDFKRLQRLLIYTNLDELTMKTNHLFYNNYRKKIFEIENDCGAMKEARYLRLRTETIRILNDKYESRINALRKEEEEMERFYSEKIREMNDKMGEISKQVEKSLHVE</sequence>
<gene>
    <name type="primary">CDC10</name>
    <name type="ordered locus">ECU11_1950</name>
</gene>
<keyword id="KW-0131">Cell cycle</keyword>
<keyword id="KW-0132">Cell division</keyword>
<keyword id="KW-0342">GTP-binding</keyword>
<keyword id="KW-0547">Nucleotide-binding</keyword>
<keyword id="KW-1185">Reference proteome</keyword>
<protein>
    <recommendedName>
        <fullName>Cell division control protein 10</fullName>
    </recommendedName>
</protein>
<organism>
    <name type="scientific">Encephalitozoon cuniculi (strain GB-M1)</name>
    <name type="common">Microsporidian parasite</name>
    <dbReference type="NCBI Taxonomy" id="284813"/>
    <lineage>
        <taxon>Eukaryota</taxon>
        <taxon>Fungi</taxon>
        <taxon>Fungi incertae sedis</taxon>
        <taxon>Microsporidia</taxon>
        <taxon>Unikaryonidae</taxon>
        <taxon>Encephalitozoon</taxon>
    </lineage>
</organism>
<comment type="function">
    <text evidence="1">Septins are GTPases involved in cytokinesis. The septins localize to the site of cleavage and act as a structural scaffold that recruits different components involved in diverse processes at specific stages during the cell cycle. Septins are also involved in cell morphogenesis, chitin deposition, cell cycle regulation, cell compartmentalization and spore wall formation (By similarity).</text>
</comment>
<comment type="subunit">
    <text evidence="1">Component of the septin complex.</text>
</comment>
<comment type="developmental stage">
    <text evidence="3">Expressed in late sporogonial stages.</text>
</comment>
<comment type="similarity">
    <text evidence="2">Belongs to the TRAFAC class TrmE-Era-EngA-EngB-Septin-like GTPase superfamily. Septin GTPase family.</text>
</comment>
<name>CDC10_ENCCU</name>
<reference key="1">
    <citation type="journal article" date="2001" name="Nature">
        <title>Genome sequence and gene compaction of the eukaryote parasite Encephalitozoon cuniculi.</title>
        <authorList>
            <person name="Katinka M.D."/>
            <person name="Duprat S."/>
            <person name="Cornillot E."/>
            <person name="Metenier G."/>
            <person name="Thomarat F."/>
            <person name="Prensier G."/>
            <person name="Barbe V."/>
            <person name="Peyretaillade E."/>
            <person name="Brottier P."/>
            <person name="Wincker P."/>
            <person name="Delbac F."/>
            <person name="El Alaoui H."/>
            <person name="Peyret P."/>
            <person name="Saurin W."/>
            <person name="Gouy M."/>
            <person name="Weissenbach J."/>
            <person name="Vivares C.P."/>
        </authorList>
    </citation>
    <scope>NUCLEOTIDE SEQUENCE [LARGE SCALE GENOMIC DNA]</scope>
    <source>
        <strain>GB-M1</strain>
    </source>
</reference>
<reference key="2">
    <citation type="journal article" date="2009" name="BMC Genomics">
        <title>Identification of transcriptional signals in Encephalitozoon cuniculi widespread among Microsporidia phylum: support for accurate structural genome annotation.</title>
        <authorList>
            <person name="Peyretaillade E."/>
            <person name="Goncalves O."/>
            <person name="Terrat S."/>
            <person name="Dugat-Bony E."/>
            <person name="Wincker P."/>
            <person name="Cornman R.S."/>
            <person name="Evans J.D."/>
            <person name="Delbac F."/>
            <person name="Peyret P."/>
        </authorList>
    </citation>
    <scope>GENOME REANNOTATION</scope>
    <source>
        <strain>GB-M1</strain>
    </source>
</reference>
<reference key="3">
    <citation type="journal article" date="2006" name="Proteomics">
        <title>Proteomic analysis of the eukaryotic parasite Encephalitozoon cuniculi (microsporidia): a reference map for proteins expressed in late sporogonial stages.</title>
        <authorList>
            <person name="Brosson D."/>
            <person name="Kuhn L."/>
            <person name="Delbac F."/>
            <person name="Garin J."/>
            <person name="Vivares C.P."/>
            <person name="Texier C."/>
        </authorList>
    </citation>
    <scope>IDENTIFICATION BY MASS SPECTROMETRY [LARGE SCALE ANALYSIS]</scope>
    <scope>DEVELOPMENTAL STAGE</scope>
</reference>
<feature type="chain" id="PRO_0000381760" description="Cell division control protein 10">
    <location>
        <begin position="1"/>
        <end position="356"/>
    </location>
</feature>
<feature type="domain" description="Septin-type G" evidence="2">
    <location>
        <begin position="36"/>
        <end position="286"/>
    </location>
</feature>
<feature type="region of interest" description="G1 motif" evidence="2">
    <location>
        <begin position="46"/>
        <end position="53"/>
    </location>
</feature>
<feature type="region of interest" description="G3 motif" evidence="2">
    <location>
        <begin position="93"/>
        <end position="96"/>
    </location>
</feature>
<feature type="region of interest" description="G4 motif" evidence="2">
    <location>
        <begin position="163"/>
        <end position="166"/>
    </location>
</feature>
<feature type="binding site" evidence="1">
    <location>
        <begin position="46"/>
        <end position="53"/>
    </location>
    <ligand>
        <name>GTP</name>
        <dbReference type="ChEBI" id="CHEBI:37565"/>
    </ligand>
</feature>
<feature type="binding site" evidence="1">
    <location>
        <position position="70"/>
    </location>
    <ligand>
        <name>GTP</name>
        <dbReference type="ChEBI" id="CHEBI:37565"/>
    </ligand>
</feature>
<feature type="binding site" evidence="1">
    <location>
        <begin position="164"/>
        <end position="172"/>
    </location>
    <ligand>
        <name>GTP</name>
        <dbReference type="ChEBI" id="CHEBI:37565"/>
    </ligand>
</feature>
<feature type="binding site" evidence="1">
    <location>
        <position position="235"/>
    </location>
    <ligand>
        <name>GTP</name>
        <dbReference type="ChEBI" id="CHEBI:37565"/>
    </ligand>
</feature>
<proteinExistence type="evidence at protein level"/>
<accession>Q8SQR3</accession>